<reference key="1">
    <citation type="journal article" date="2011" name="J. Bacteriol.">
        <title>Comparative genomics of 28 Salmonella enterica isolates: evidence for CRISPR-mediated adaptive sublineage evolution.</title>
        <authorList>
            <person name="Fricke W.F."/>
            <person name="Mammel M.K."/>
            <person name="McDermott P.F."/>
            <person name="Tartera C."/>
            <person name="White D.G."/>
            <person name="Leclerc J.E."/>
            <person name="Ravel J."/>
            <person name="Cebula T.A."/>
        </authorList>
    </citation>
    <scope>NUCLEOTIDE SEQUENCE [LARGE SCALE GENOMIC DNA]</scope>
    <source>
        <strain>CVM19633</strain>
    </source>
</reference>
<proteinExistence type="inferred from homology"/>
<accession>B4TZ64</accession>
<gene>
    <name evidence="1" type="primary">dlgD</name>
    <name type="ordered locus">SeSA_A3866</name>
</gene>
<dbReference type="EC" id="1.1.1.130" evidence="1"/>
<dbReference type="EMBL" id="CP001127">
    <property type="protein sequence ID" value="ACF92796.1"/>
    <property type="molecule type" value="Genomic_DNA"/>
</dbReference>
<dbReference type="SMR" id="B4TZ64"/>
<dbReference type="KEGG" id="sew:SeSA_A3866"/>
<dbReference type="HOGENOM" id="CLU_040452_4_0_6"/>
<dbReference type="Proteomes" id="UP000001865">
    <property type="component" value="Chromosome"/>
</dbReference>
<dbReference type="GO" id="GO:0005737">
    <property type="term" value="C:cytoplasm"/>
    <property type="evidence" value="ECO:0007669"/>
    <property type="project" value="UniProtKB-SubCell"/>
</dbReference>
<dbReference type="GO" id="GO:0047559">
    <property type="term" value="F:3-dehydro-L-gulonate 2-dehydrogenase activity"/>
    <property type="evidence" value="ECO:0007669"/>
    <property type="project" value="UniProtKB-UniRule"/>
</dbReference>
<dbReference type="GO" id="GO:0070403">
    <property type="term" value="F:NAD+ binding"/>
    <property type="evidence" value="ECO:0007669"/>
    <property type="project" value="InterPro"/>
</dbReference>
<dbReference type="Gene3D" id="1.10.1530.10">
    <property type="match status" value="1"/>
</dbReference>
<dbReference type="Gene3D" id="3.30.1370.60">
    <property type="entry name" value="Hypothetical oxidoreductase yiak, domain 2"/>
    <property type="match status" value="1"/>
</dbReference>
<dbReference type="Gene3D" id="3.30.60.50">
    <property type="entry name" value="Hypothetical oxidoreductase yiak, domain 3"/>
    <property type="match status" value="1"/>
</dbReference>
<dbReference type="HAMAP" id="MF_00820">
    <property type="entry name" value="Diketo_gul_reduc"/>
    <property type="match status" value="1"/>
</dbReference>
<dbReference type="InterPro" id="IPR023689">
    <property type="entry name" value="Diketo_gul_Rdtase"/>
</dbReference>
<dbReference type="InterPro" id="IPR043144">
    <property type="entry name" value="Mal/L-sulf/L-lact_DH-like_ah"/>
</dbReference>
<dbReference type="InterPro" id="IPR043143">
    <property type="entry name" value="Mal/L-sulf/L-lact_DH-like_NADP"/>
</dbReference>
<dbReference type="InterPro" id="IPR036111">
    <property type="entry name" value="Mal/L-sulfo/L-lacto_DH-like_sf"/>
</dbReference>
<dbReference type="InterPro" id="IPR003767">
    <property type="entry name" value="Malate/L-lactate_DH-like"/>
</dbReference>
<dbReference type="NCBIfam" id="NF009750">
    <property type="entry name" value="PRK13260.1"/>
    <property type="match status" value="1"/>
</dbReference>
<dbReference type="PANTHER" id="PTHR11091:SF3">
    <property type="entry name" value="2,3-DIKETO-L-GULONATE REDUCTASE"/>
    <property type="match status" value="1"/>
</dbReference>
<dbReference type="PANTHER" id="PTHR11091">
    <property type="entry name" value="OXIDOREDUCTASE-RELATED"/>
    <property type="match status" value="1"/>
</dbReference>
<dbReference type="Pfam" id="PF02615">
    <property type="entry name" value="Ldh_2"/>
    <property type="match status" value="1"/>
</dbReference>
<dbReference type="SUPFAM" id="SSF89733">
    <property type="entry name" value="L-sulfolactate dehydrogenase-like"/>
    <property type="match status" value="1"/>
</dbReference>
<keyword id="KW-0963">Cytoplasm</keyword>
<keyword id="KW-0520">NAD</keyword>
<keyword id="KW-0560">Oxidoreductase</keyword>
<feature type="chain" id="PRO_1000134352" description="2,3-diketo-L-gulonate reductase">
    <location>
        <begin position="1"/>
        <end position="332"/>
    </location>
</feature>
<feature type="active site" description="Proton donor" evidence="1">
    <location>
        <position position="44"/>
    </location>
</feature>
<feature type="binding site" evidence="1">
    <location>
        <begin position="168"/>
        <end position="174"/>
    </location>
    <ligand>
        <name>NAD(+)</name>
        <dbReference type="ChEBI" id="CHEBI:57540"/>
    </ligand>
</feature>
<feature type="binding site" evidence="1">
    <location>
        <begin position="224"/>
        <end position="225"/>
    </location>
    <ligand>
        <name>NAD(+)</name>
        <dbReference type="ChEBI" id="CHEBI:57540"/>
    </ligand>
</feature>
<feature type="binding site" evidence="1">
    <location>
        <begin position="304"/>
        <end position="306"/>
    </location>
    <ligand>
        <name>NAD(+)</name>
        <dbReference type="ChEBI" id="CHEBI:57540"/>
    </ligand>
</feature>
<organism>
    <name type="scientific">Salmonella schwarzengrund (strain CVM19633)</name>
    <dbReference type="NCBI Taxonomy" id="439843"/>
    <lineage>
        <taxon>Bacteria</taxon>
        <taxon>Pseudomonadati</taxon>
        <taxon>Pseudomonadota</taxon>
        <taxon>Gammaproteobacteria</taxon>
        <taxon>Enterobacterales</taxon>
        <taxon>Enterobacteriaceae</taxon>
        <taxon>Salmonella</taxon>
    </lineage>
</organism>
<comment type="function">
    <text evidence="1">Catalyzes the reduction of 2,3-diketo-L-gulonate in the presence of NADH, to form 3-keto-L-gulonate.</text>
</comment>
<comment type="catalytic activity">
    <reaction evidence="1">
        <text>3-dehydro-L-gulonate + NAD(+) = 2,3-dioxo-L-gulonate + NADH + H(+)</text>
        <dbReference type="Rhea" id="RHEA:21924"/>
        <dbReference type="ChEBI" id="CHEBI:15378"/>
        <dbReference type="ChEBI" id="CHEBI:57441"/>
        <dbReference type="ChEBI" id="CHEBI:57540"/>
        <dbReference type="ChEBI" id="CHEBI:57655"/>
        <dbReference type="ChEBI" id="CHEBI:57945"/>
        <dbReference type="EC" id="1.1.1.130"/>
    </reaction>
</comment>
<comment type="catalytic activity">
    <reaction evidence="1">
        <text>3-dehydro-L-gulonate + NADP(+) = 2,3-dioxo-L-gulonate + NADPH + H(+)</text>
        <dbReference type="Rhea" id="RHEA:21928"/>
        <dbReference type="ChEBI" id="CHEBI:15378"/>
        <dbReference type="ChEBI" id="CHEBI:57441"/>
        <dbReference type="ChEBI" id="CHEBI:57655"/>
        <dbReference type="ChEBI" id="CHEBI:57783"/>
        <dbReference type="ChEBI" id="CHEBI:58349"/>
        <dbReference type="EC" id="1.1.1.130"/>
    </reaction>
</comment>
<comment type="subunit">
    <text evidence="1">Homodimer.</text>
</comment>
<comment type="subcellular location">
    <subcellularLocation>
        <location evidence="1">Cytoplasm</location>
    </subcellularLocation>
</comment>
<comment type="similarity">
    <text evidence="1">Belongs to the LDH2/MDH2 oxidoreductase family. DlgD subfamily.</text>
</comment>
<protein>
    <recommendedName>
        <fullName evidence="1">2,3-diketo-L-gulonate reductase</fullName>
        <shortName evidence="1">2,3-DKG reductase</shortName>
        <ecNumber evidence="1">1.1.1.130</ecNumber>
    </recommendedName>
    <alternativeName>
        <fullName evidence="1">3-dehydro-L-gulonate 2-dehydrogenase</fullName>
    </alternativeName>
</protein>
<evidence type="ECO:0000255" key="1">
    <source>
        <dbReference type="HAMAP-Rule" id="MF_00820"/>
    </source>
</evidence>
<sequence>MKVTFEELKGAFYRVLRSRNIAEDTADACAEMFARTTESGVYSHGVNRFPRFIQQLDNGDIIPDAKPQRVTSLGAIEQWDAQRAIGNLTAKKMMDRAIELASDHGIGLVALRNANHWMRGGSYGWQAAEKGYIGICWTNSIAVMPPWGAKECRIGTNPLIVAIPSTPITMVDMSMSMFSYGMLEVNRLAGRELPVDGGFDDNGQLTKEPGVIEKNRRILPMGYWKGSGLSIVLDMIATLLSNGSSVAEVTQENSDEYGVSQIFIAIEVDKLIDGATRDAKLQRIMDFITTAERADDNVAIRLPGHEFTKLLDDNRRHGITIDDSVWAKIQAL</sequence>
<name>DLGD_SALSV</name>